<reference key="1">
    <citation type="journal article" date="2006" name="Nat. Biotechnol.">
        <title>Genome sequence of the bioplastic-producing 'Knallgas' bacterium Ralstonia eutropha H16.</title>
        <authorList>
            <person name="Pohlmann A."/>
            <person name="Fricke W.F."/>
            <person name="Reinecke F."/>
            <person name="Kusian B."/>
            <person name="Liesegang H."/>
            <person name="Cramm R."/>
            <person name="Eitinger T."/>
            <person name="Ewering C."/>
            <person name="Poetter M."/>
            <person name="Schwartz E."/>
            <person name="Strittmatter A."/>
            <person name="Voss I."/>
            <person name="Gottschalk G."/>
            <person name="Steinbuechel A."/>
            <person name="Friedrich B."/>
            <person name="Bowien B."/>
        </authorList>
    </citation>
    <scope>NUCLEOTIDE SEQUENCE [LARGE SCALE GENOMIC DNA]</scope>
    <source>
        <strain>ATCC 17699 / DSM 428 / KCTC 22496 / NCIMB 10442 / H16 / Stanier 337</strain>
    </source>
</reference>
<gene>
    <name evidence="1" type="primary">prmA</name>
    <name type="ordered locus">H16_A3173</name>
</gene>
<keyword id="KW-0963">Cytoplasm</keyword>
<keyword id="KW-0489">Methyltransferase</keyword>
<keyword id="KW-1185">Reference proteome</keyword>
<keyword id="KW-0949">S-adenosyl-L-methionine</keyword>
<keyword id="KW-0808">Transferase</keyword>
<protein>
    <recommendedName>
        <fullName evidence="1">Ribosomal protein L11 methyltransferase</fullName>
        <shortName evidence="1">L11 Mtase</shortName>
        <ecNumber evidence="1">2.1.1.-</ecNumber>
    </recommendedName>
</protein>
<proteinExistence type="inferred from homology"/>
<organism>
    <name type="scientific">Cupriavidus necator (strain ATCC 17699 / DSM 428 / KCTC 22496 / NCIMB 10442 / H16 / Stanier 337)</name>
    <name type="common">Ralstonia eutropha</name>
    <dbReference type="NCBI Taxonomy" id="381666"/>
    <lineage>
        <taxon>Bacteria</taxon>
        <taxon>Pseudomonadati</taxon>
        <taxon>Pseudomonadota</taxon>
        <taxon>Betaproteobacteria</taxon>
        <taxon>Burkholderiales</taxon>
        <taxon>Burkholderiaceae</taxon>
        <taxon>Cupriavidus</taxon>
    </lineage>
</organism>
<dbReference type="EC" id="2.1.1.-" evidence="1"/>
<dbReference type="EMBL" id="AM260479">
    <property type="protein sequence ID" value="CAJ94248.1"/>
    <property type="molecule type" value="Genomic_DNA"/>
</dbReference>
<dbReference type="RefSeq" id="WP_010813182.1">
    <property type="nucleotide sequence ID" value="NZ_CP039287.1"/>
</dbReference>
<dbReference type="SMR" id="Q0K6X3"/>
<dbReference type="STRING" id="381666.H16_A3173"/>
<dbReference type="KEGG" id="reh:H16_A3173"/>
<dbReference type="eggNOG" id="COG2264">
    <property type="taxonomic scope" value="Bacteria"/>
</dbReference>
<dbReference type="HOGENOM" id="CLU_049382_4_1_4"/>
<dbReference type="OrthoDB" id="9785995at2"/>
<dbReference type="Proteomes" id="UP000008210">
    <property type="component" value="Chromosome 1"/>
</dbReference>
<dbReference type="GO" id="GO:0005829">
    <property type="term" value="C:cytosol"/>
    <property type="evidence" value="ECO:0007669"/>
    <property type="project" value="TreeGrafter"/>
</dbReference>
<dbReference type="GO" id="GO:0016279">
    <property type="term" value="F:protein-lysine N-methyltransferase activity"/>
    <property type="evidence" value="ECO:0007669"/>
    <property type="project" value="TreeGrafter"/>
</dbReference>
<dbReference type="GO" id="GO:0032259">
    <property type="term" value="P:methylation"/>
    <property type="evidence" value="ECO:0007669"/>
    <property type="project" value="UniProtKB-KW"/>
</dbReference>
<dbReference type="CDD" id="cd02440">
    <property type="entry name" value="AdoMet_MTases"/>
    <property type="match status" value="1"/>
</dbReference>
<dbReference type="Gene3D" id="3.40.50.150">
    <property type="entry name" value="Vaccinia Virus protein VP39"/>
    <property type="match status" value="1"/>
</dbReference>
<dbReference type="HAMAP" id="MF_00735">
    <property type="entry name" value="Methyltr_PrmA"/>
    <property type="match status" value="1"/>
</dbReference>
<dbReference type="InterPro" id="IPR050078">
    <property type="entry name" value="Ribosomal_L11_MeTrfase_PrmA"/>
</dbReference>
<dbReference type="InterPro" id="IPR004498">
    <property type="entry name" value="Ribosomal_PrmA_MeTrfase"/>
</dbReference>
<dbReference type="InterPro" id="IPR029063">
    <property type="entry name" value="SAM-dependent_MTases_sf"/>
</dbReference>
<dbReference type="NCBIfam" id="TIGR00406">
    <property type="entry name" value="prmA"/>
    <property type="match status" value="1"/>
</dbReference>
<dbReference type="PANTHER" id="PTHR43648">
    <property type="entry name" value="ELECTRON TRANSFER FLAVOPROTEIN BETA SUBUNIT LYSINE METHYLTRANSFERASE"/>
    <property type="match status" value="1"/>
</dbReference>
<dbReference type="PANTHER" id="PTHR43648:SF1">
    <property type="entry name" value="ELECTRON TRANSFER FLAVOPROTEIN BETA SUBUNIT LYSINE METHYLTRANSFERASE"/>
    <property type="match status" value="1"/>
</dbReference>
<dbReference type="Pfam" id="PF06325">
    <property type="entry name" value="PrmA"/>
    <property type="match status" value="1"/>
</dbReference>
<dbReference type="PIRSF" id="PIRSF000401">
    <property type="entry name" value="RPL11_MTase"/>
    <property type="match status" value="1"/>
</dbReference>
<dbReference type="SUPFAM" id="SSF53335">
    <property type="entry name" value="S-adenosyl-L-methionine-dependent methyltransferases"/>
    <property type="match status" value="1"/>
</dbReference>
<comment type="function">
    <text evidence="1">Methylates ribosomal protein L11.</text>
</comment>
<comment type="catalytic activity">
    <reaction evidence="1">
        <text>L-lysyl-[protein] + 3 S-adenosyl-L-methionine = N(6),N(6),N(6)-trimethyl-L-lysyl-[protein] + 3 S-adenosyl-L-homocysteine + 3 H(+)</text>
        <dbReference type="Rhea" id="RHEA:54192"/>
        <dbReference type="Rhea" id="RHEA-COMP:9752"/>
        <dbReference type="Rhea" id="RHEA-COMP:13826"/>
        <dbReference type="ChEBI" id="CHEBI:15378"/>
        <dbReference type="ChEBI" id="CHEBI:29969"/>
        <dbReference type="ChEBI" id="CHEBI:57856"/>
        <dbReference type="ChEBI" id="CHEBI:59789"/>
        <dbReference type="ChEBI" id="CHEBI:61961"/>
    </reaction>
</comment>
<comment type="subcellular location">
    <subcellularLocation>
        <location evidence="1">Cytoplasm</location>
    </subcellularLocation>
</comment>
<comment type="similarity">
    <text evidence="1">Belongs to the methyltransferase superfamily. PrmA family.</text>
</comment>
<sequence length="300" mass="32380">MAFQECVIEVAQDQAEAWSDALFDLGALSVSVEDADADTPDEQPLFGEPGLEPKQLAWNRSRVVALFGDDADPAVVVAAAANQLGIDPVPAYQLRAVEDQDWVRLTQSQFEPIRIGERIWVVPSWHDAPEPDAVVLELDPGLAFGTGSHPTTRLCMQWLEQNLKPGETVLDYGCGSGILAIVARKLGAGDTVGIDIDPNAVEASRYNAERNRVEASFALPESVSEASYDLVVANILSNPLKLMAAMLSARVRAGGRLVLSGVLERQADEVAAAYAPWLPLTVWRSEEGWVCLHGTRGAQP</sequence>
<name>PRMA_CUPNH</name>
<feature type="chain" id="PRO_1000046075" description="Ribosomal protein L11 methyltransferase">
    <location>
        <begin position="1"/>
        <end position="300"/>
    </location>
</feature>
<feature type="binding site" evidence="1">
    <location>
        <position position="152"/>
    </location>
    <ligand>
        <name>S-adenosyl-L-methionine</name>
        <dbReference type="ChEBI" id="CHEBI:59789"/>
    </ligand>
</feature>
<feature type="binding site" evidence="1">
    <location>
        <position position="173"/>
    </location>
    <ligand>
        <name>S-adenosyl-L-methionine</name>
        <dbReference type="ChEBI" id="CHEBI:59789"/>
    </ligand>
</feature>
<feature type="binding site" evidence="1">
    <location>
        <position position="195"/>
    </location>
    <ligand>
        <name>S-adenosyl-L-methionine</name>
        <dbReference type="ChEBI" id="CHEBI:59789"/>
    </ligand>
</feature>
<feature type="binding site" evidence="1">
    <location>
        <position position="234"/>
    </location>
    <ligand>
        <name>S-adenosyl-L-methionine</name>
        <dbReference type="ChEBI" id="CHEBI:59789"/>
    </ligand>
</feature>
<accession>Q0K6X3</accession>
<evidence type="ECO:0000255" key="1">
    <source>
        <dbReference type="HAMAP-Rule" id="MF_00735"/>
    </source>
</evidence>